<evidence type="ECO:0000250" key="1">
    <source>
        <dbReference type="UniProtKB" id="P75797"/>
    </source>
</evidence>
<evidence type="ECO:0000255" key="2"/>
<evidence type="ECO:0000305" key="3"/>
<feature type="signal peptide" evidence="2">
    <location>
        <begin position="1"/>
        <end position="26"/>
    </location>
</feature>
<feature type="chain" id="PRO_0000279984" description="Glutathione-binding protein GsiB">
    <location>
        <begin position="27"/>
        <end position="512"/>
    </location>
</feature>
<accession>Q821B3</accession>
<accession>Q7UD84</accession>
<gene>
    <name evidence="1" type="primary">gsiB</name>
    <name type="ordered locus">SF0780</name>
    <name type="ordered locus">S0823</name>
</gene>
<proteinExistence type="inferred from homology"/>
<organism>
    <name type="scientific">Shigella flexneri</name>
    <dbReference type="NCBI Taxonomy" id="623"/>
    <lineage>
        <taxon>Bacteria</taxon>
        <taxon>Pseudomonadati</taxon>
        <taxon>Pseudomonadota</taxon>
        <taxon>Gammaproteobacteria</taxon>
        <taxon>Enterobacterales</taxon>
        <taxon>Enterobacteriaceae</taxon>
        <taxon>Shigella</taxon>
    </lineage>
</organism>
<dbReference type="EMBL" id="AE005674">
    <property type="protein sequence ID" value="AAN42414.2"/>
    <property type="molecule type" value="Genomic_DNA"/>
</dbReference>
<dbReference type="EMBL" id="AE014073">
    <property type="protein sequence ID" value="AAP16290.1"/>
    <property type="molecule type" value="Genomic_DNA"/>
</dbReference>
<dbReference type="RefSeq" id="NP_706707.2">
    <property type="nucleotide sequence ID" value="NC_004337.2"/>
</dbReference>
<dbReference type="RefSeq" id="WP_000090147.1">
    <property type="nucleotide sequence ID" value="NZ_WPGW01000058.1"/>
</dbReference>
<dbReference type="SMR" id="Q821B3"/>
<dbReference type="STRING" id="198214.SF0780"/>
<dbReference type="PaxDb" id="198214-SF0780"/>
<dbReference type="GeneID" id="1026150"/>
<dbReference type="KEGG" id="sfl:SF0780"/>
<dbReference type="KEGG" id="sfx:S0823"/>
<dbReference type="PATRIC" id="fig|198214.7.peg.905"/>
<dbReference type="HOGENOM" id="CLU_017028_7_3_6"/>
<dbReference type="Proteomes" id="UP000001006">
    <property type="component" value="Chromosome"/>
</dbReference>
<dbReference type="Proteomes" id="UP000002673">
    <property type="component" value="Chromosome"/>
</dbReference>
<dbReference type="GO" id="GO:0043190">
    <property type="term" value="C:ATP-binding cassette (ABC) transporter complex"/>
    <property type="evidence" value="ECO:0007669"/>
    <property type="project" value="InterPro"/>
</dbReference>
<dbReference type="GO" id="GO:0030288">
    <property type="term" value="C:outer membrane-bounded periplasmic space"/>
    <property type="evidence" value="ECO:0007669"/>
    <property type="project" value="TreeGrafter"/>
</dbReference>
<dbReference type="GO" id="GO:1904680">
    <property type="term" value="F:peptide transmembrane transporter activity"/>
    <property type="evidence" value="ECO:0007669"/>
    <property type="project" value="TreeGrafter"/>
</dbReference>
<dbReference type="GO" id="GO:0042938">
    <property type="term" value="P:dipeptide transport"/>
    <property type="evidence" value="ECO:0007669"/>
    <property type="project" value="TreeGrafter"/>
</dbReference>
<dbReference type="CDD" id="cd08499">
    <property type="entry name" value="PBP2_Ylib_like"/>
    <property type="match status" value="1"/>
</dbReference>
<dbReference type="FunFam" id="3.10.105.10:FF:000003">
    <property type="entry name" value="Glutathione ABC transporter substrate-binding protein GsiB"/>
    <property type="match status" value="1"/>
</dbReference>
<dbReference type="FunFam" id="3.40.190.10:FF:000094">
    <property type="entry name" value="Glutathione ABC transporter substrate-binding protein GsiB"/>
    <property type="match status" value="1"/>
</dbReference>
<dbReference type="FunFam" id="3.90.76.10:FF:000003">
    <property type="entry name" value="Glutathione ABC transporter substrate-binding protein GsiB"/>
    <property type="match status" value="1"/>
</dbReference>
<dbReference type="Gene3D" id="3.90.76.10">
    <property type="entry name" value="Dipeptide-binding Protein, Domain 1"/>
    <property type="match status" value="1"/>
</dbReference>
<dbReference type="Gene3D" id="3.10.105.10">
    <property type="entry name" value="Dipeptide-binding Protein, Domain 3"/>
    <property type="match status" value="1"/>
</dbReference>
<dbReference type="Gene3D" id="3.40.190.10">
    <property type="entry name" value="Periplasmic binding protein-like II"/>
    <property type="match status" value="1"/>
</dbReference>
<dbReference type="InterPro" id="IPR030678">
    <property type="entry name" value="Peptide/Ni-bd"/>
</dbReference>
<dbReference type="InterPro" id="IPR039424">
    <property type="entry name" value="SBP_5"/>
</dbReference>
<dbReference type="InterPro" id="IPR023765">
    <property type="entry name" value="SBP_5_CS"/>
</dbReference>
<dbReference type="InterPro" id="IPR000914">
    <property type="entry name" value="SBP_5_dom"/>
</dbReference>
<dbReference type="NCBIfam" id="NF011942">
    <property type="entry name" value="PRK15413.1"/>
    <property type="match status" value="1"/>
</dbReference>
<dbReference type="PANTHER" id="PTHR30290:SF32">
    <property type="entry name" value="GLUTATHIONE-BINDING PROTEIN GSIB"/>
    <property type="match status" value="1"/>
</dbReference>
<dbReference type="PANTHER" id="PTHR30290">
    <property type="entry name" value="PERIPLASMIC BINDING COMPONENT OF ABC TRANSPORTER"/>
    <property type="match status" value="1"/>
</dbReference>
<dbReference type="Pfam" id="PF00496">
    <property type="entry name" value="SBP_bac_5"/>
    <property type="match status" value="1"/>
</dbReference>
<dbReference type="PIRSF" id="PIRSF002741">
    <property type="entry name" value="MppA"/>
    <property type="match status" value="1"/>
</dbReference>
<dbReference type="SUPFAM" id="SSF53850">
    <property type="entry name" value="Periplasmic binding protein-like II"/>
    <property type="match status" value="1"/>
</dbReference>
<dbReference type="PROSITE" id="PS01040">
    <property type="entry name" value="SBP_BACTERIAL_5"/>
    <property type="match status" value="1"/>
</dbReference>
<protein>
    <recommendedName>
        <fullName evidence="1">Glutathione-binding protein GsiB</fullName>
    </recommendedName>
</protein>
<comment type="function">
    <text evidence="1">Part of the ABC transporter complex GsiABCD involved in glutathione import. Binds glutathione.</text>
</comment>
<comment type="subunit">
    <text evidence="1">The complex is composed of two ATP-binding proteins (GsiA), two transmembrane proteins (GsiC and GsiD) and a solute-binding protein (GsiB).</text>
</comment>
<comment type="subcellular location">
    <subcellularLocation>
        <location evidence="1">Periplasm</location>
    </subcellularLocation>
</comment>
<comment type="similarity">
    <text evidence="3">Belongs to the bacterial solute-binding protein 5 family.</text>
</comment>
<sequence length="512" mass="56502">MARAVHRSGLVALGIATALMASCAFAAKDVVVAVGSNFTTLDPYDANDTLSQAVAKSFYQGLFGLDKEMKLKNVLAESYTVSDDGITYTVKLREGIKFQDGTDFNAVAVKANLDRASDPANHLKRYNLYKNIAKTEAIDPTTVKITLKQPFSAFINILAHPATAMISPTALEKYGKEIGFHPVGTGPYELDTWNQTDFVKVKKFAGYWQPGLPKLDSITWRPVADNNTRAAMLQTGEAQFAFPIPYEQATLLEKNKNIELMASPSIMQRYISMNVTQKPFDNPKVREALNYAINRPALVKVAFAGYATPATGVVPPSIAYAQSYKPWPYDPVKARELLKEAGYPNGFSTTLWSSHNHSTAQKVLQFTQQQLAQVGIKAQVTAMDAGQRAAEVEGKGQKESGVRMFYTGWSASTGEADWALSPLFASQNWPPTLFNTAFYSNKQVDDFLAQALKTNDPAEKTRLYKAAQDIIWQESPWIPLVVEKLVSAHSKNLTGFWIMPDTGFSFEDADLQ</sequence>
<keyword id="KW-0574">Periplasm</keyword>
<keyword id="KW-1185">Reference proteome</keyword>
<keyword id="KW-0732">Signal</keyword>
<keyword id="KW-0813">Transport</keyword>
<name>GSIB_SHIFL</name>
<reference key="1">
    <citation type="journal article" date="2002" name="Nucleic Acids Res.">
        <title>Genome sequence of Shigella flexneri 2a: insights into pathogenicity through comparison with genomes of Escherichia coli K12 and O157.</title>
        <authorList>
            <person name="Jin Q."/>
            <person name="Yuan Z."/>
            <person name="Xu J."/>
            <person name="Wang Y."/>
            <person name="Shen Y."/>
            <person name="Lu W."/>
            <person name="Wang J."/>
            <person name="Liu H."/>
            <person name="Yang J."/>
            <person name="Yang F."/>
            <person name="Zhang X."/>
            <person name="Zhang J."/>
            <person name="Yang G."/>
            <person name="Wu H."/>
            <person name="Qu D."/>
            <person name="Dong J."/>
            <person name="Sun L."/>
            <person name="Xue Y."/>
            <person name="Zhao A."/>
            <person name="Gao Y."/>
            <person name="Zhu J."/>
            <person name="Kan B."/>
            <person name="Ding K."/>
            <person name="Chen S."/>
            <person name="Cheng H."/>
            <person name="Yao Z."/>
            <person name="He B."/>
            <person name="Chen R."/>
            <person name="Ma D."/>
            <person name="Qiang B."/>
            <person name="Wen Y."/>
            <person name="Hou Y."/>
            <person name="Yu J."/>
        </authorList>
    </citation>
    <scope>NUCLEOTIDE SEQUENCE [LARGE SCALE GENOMIC DNA]</scope>
    <source>
        <strain>301 / Serotype 2a</strain>
    </source>
</reference>
<reference key="2">
    <citation type="journal article" date="2003" name="Infect. Immun.">
        <title>Complete genome sequence and comparative genomics of Shigella flexneri serotype 2a strain 2457T.</title>
        <authorList>
            <person name="Wei J."/>
            <person name="Goldberg M.B."/>
            <person name="Burland V."/>
            <person name="Venkatesan M.M."/>
            <person name="Deng W."/>
            <person name="Fournier G."/>
            <person name="Mayhew G.F."/>
            <person name="Plunkett G. III"/>
            <person name="Rose D.J."/>
            <person name="Darling A."/>
            <person name="Mau B."/>
            <person name="Perna N.T."/>
            <person name="Payne S.M."/>
            <person name="Runyen-Janecky L.J."/>
            <person name="Zhou S."/>
            <person name="Schwartz D.C."/>
            <person name="Blattner F.R."/>
        </authorList>
    </citation>
    <scope>NUCLEOTIDE SEQUENCE [LARGE SCALE GENOMIC DNA]</scope>
    <source>
        <strain>ATCC 700930 / 2457T / Serotype 2a</strain>
    </source>
</reference>